<reference key="1">
    <citation type="journal article" date="1987" name="Cell">
        <title>The circumsporozoite gene of the Plasmodium cynomolgi complex.</title>
        <authorList>
            <person name="Galinski M.R."/>
            <person name="Arnot D.E."/>
            <person name="Cochrane A.H."/>
            <person name="Barnwell J.W."/>
            <person name="Nussenzweig R.S."/>
            <person name="Enea V."/>
        </authorList>
    </citation>
    <scope>NUCLEOTIDE SEQUENCE [GENOMIC DNA]</scope>
    <scope>POLYMORPHISM</scope>
    <scope>REPEATS</scope>
</reference>
<comment type="function">
    <text evidence="1 3">Essential sporozoite protein (By similarity). In the mosquito vector, required for sporozoite development in the oocyst, migration through the vector hemolymph and entry into the vector salivary glands (By similarity). In the vertebrate host, required for sporozoite migration through the host dermis and infection of host hepatocytes (By similarity). Binds to highly sulfated heparan sulfate proteoglycans (HSPGs) on the surface of host hepatocytes (By similarity).</text>
</comment>
<comment type="function">
    <molecule>Circumsporozoite protein C-terminus</molecule>
    <text evidence="3">In the vertebrate host, binds to highly sulfated heparan sulfate proteoglycans (HSPGs) on the surface of host hepatocytes and is required for sporozoite invasion of the host hepatocytes.</text>
</comment>
<comment type="subcellular location">
    <subcellularLocation>
        <location evidence="2">Cell membrane</location>
        <topology evidence="5">Lipid-anchor</topology>
        <topology evidence="5">GPI-anchor</topology>
    </subcellularLocation>
    <subcellularLocation>
        <location evidence="3">Cytoplasm</location>
    </subcellularLocation>
    <text evidence="3">Localizes to the cytoplasm and the cell membrane in oocysts at day 6 post infection and then gradually distributes over the entire cell surface of the sporoblast and the budding sporozoites.</text>
</comment>
<comment type="domain">
    <text evidence="3 4">The N-terminus is involved in the initial binding to heparan sulfate proteoglycans (HSPGs) on the surface of host hepatocytes (By similarity). The N-terminus masks the TSP type-1 (TSR) domain which maintains the sporozoites in a migratory state, enabling them to complete their journey to the salivary gland in the mosquito vector and then to the host liver. The unmasking of the TSP type-1 (TSR) domain when the sporozoite interacts with the host hepatocyte also protects sporozoites from host antibodies (By similarity).</text>
</comment>
<comment type="domain">
    <text evidence="3">The TSP type-1 (TSR) domain is required for sporozoite development and invasion. CSP has two conformational states, an adhesive conformation in which the TSP type-1 (TSR) domain is exposed and a nonadhesive conformation in which the TSR is masked by the N-terminus. TSR-exposed conformation occurs during sporozoite development in the oocyst in the mosquito vector and during host hepatocyte invasion. TSR-masked conformation occurs during sporozoite migration through the hemolymph to salivary glands in the mosquito vector and in the host dermis.</text>
</comment>
<comment type="domain">
    <text evidence="3">The GPI-anchor is essential for cell membrane localization and for sporozoite formation inside the oocyst.</text>
</comment>
<comment type="PTM">
    <text evidence="1 3">During host cell invasion, proteolytically cleaved at the cell membrane in the region I by a papain-like cysteine protease of parasite origin (By similarity). Cleavage is triggered by the sporozoite contact with highly sulfated heparan sulfate proteoglycans (HSPGs) present on the host hepatocyte cell surface (By similarity). Cleavage exposes the TSP type-1 (TSR) domain and is required for productive invasion of host hepatocytes but not for adhesion to the host cell membrane (By similarity). Cleavage is dispensable for sporozoite development in the oocyst, motility and for traversal of host and vector cells (By similarity).</text>
</comment>
<comment type="PTM">
    <text evidence="2">O-glycosylated; maybe by POFUT2.</text>
</comment>
<comment type="polymorphism">
    <text evidence="8">The sequence of the repeats varies across Plasmodium species and strains.</text>
</comment>
<comment type="similarity">
    <text evidence="10">Belongs to the plasmodium circumsporozoite protein family.</text>
</comment>
<sequence length="398" mass="37719">MKNFNLLAVSSILLVDLFRTQWGHNVHFSKAINLNGVSFNNVDASSLGAAQVRQSASRGRGLGENPKNEEGADKPKKKDEKQVEPKKPRENKLKQPAGNNAAAGEAGNNAAAGEAGNNAAAGEAGNNAAAGEAGNNAAAGEAGNNAAAGEAGNNAAGGAAGNNAAGGEAGNNAAGGAAGNNAAAGEAGNNAAGGEAGNNAAAGEAGNNAAGGAAGNNAAAGEAGNNAAAGAAGNNAAAGAAGNNAAAGEAGAGGAGRAGNNAAAGEAGAGGAGRAGNNAAAGEAGAGGAGGNAGNKKAGDAGQGQNNGGANVPNVKLVKEYLDKIRSTIGVEWSPCSVTCGKGVRMRRKVNAANKKPEELDANDLETEVCTMDKCAGIFNVVSNSLGLVILLVLALFN</sequence>
<proteinExistence type="inferred from homology"/>
<organism>
    <name type="scientific">Plasmodium cynomolgi (strain Ceylon)</name>
    <dbReference type="NCBI Taxonomy" id="5829"/>
    <lineage>
        <taxon>Eukaryota</taxon>
        <taxon>Sar</taxon>
        <taxon>Alveolata</taxon>
        <taxon>Apicomplexa</taxon>
        <taxon>Aconoidasida</taxon>
        <taxon>Haemosporida</taxon>
        <taxon>Plasmodiidae</taxon>
        <taxon>Plasmodium</taxon>
        <taxon>Plasmodium (Plasmodium)</taxon>
    </lineage>
</organism>
<accession>P08673</accession>
<gene>
    <name evidence="3" type="primary">CSP</name>
</gene>
<protein>
    <recommendedName>
        <fullName evidence="9">Circumsporozoite protein</fullName>
        <shortName evidence="9">CS</shortName>
    </recommendedName>
    <component>
        <recommendedName>
            <fullName evidence="10">Circumsporozoite protein C-terminus</fullName>
        </recommendedName>
    </component>
</protein>
<feature type="signal peptide" evidence="5">
    <location>
        <begin position="1"/>
        <end position="23"/>
    </location>
</feature>
<feature type="chain" id="PRO_0000024522" description="Circumsporozoite protein" evidence="5">
    <location>
        <begin position="24"/>
        <end position="375"/>
    </location>
</feature>
<feature type="chain" id="PRO_0000455476" description="Circumsporozoite protein C-terminus" evidence="3">
    <location>
        <begin status="unknown"/>
        <end position="375"/>
    </location>
</feature>
<feature type="propeptide" id="PRO_0000455477" description="Removed in mature form" evidence="5">
    <location>
        <begin position="376"/>
        <end position="398"/>
    </location>
</feature>
<feature type="repeat" description="1-1" evidence="11">
    <location>
        <begin position="97"/>
        <end position="105"/>
    </location>
</feature>
<feature type="repeat" description="1-2" evidence="11">
    <location>
        <begin position="106"/>
        <end position="114"/>
    </location>
</feature>
<feature type="repeat" description="1-3" evidence="11">
    <location>
        <begin position="115"/>
        <end position="123"/>
    </location>
</feature>
<feature type="repeat" description="1-4" evidence="11">
    <location>
        <begin position="124"/>
        <end position="132"/>
    </location>
</feature>
<feature type="repeat" description="1-5" evidence="11">
    <location>
        <begin position="133"/>
        <end position="141"/>
    </location>
</feature>
<feature type="repeat" description="1-6" evidence="11">
    <location>
        <begin position="142"/>
        <end position="150"/>
    </location>
</feature>
<feature type="repeat" description="1-7" evidence="11">
    <location>
        <begin position="151"/>
        <end position="159"/>
    </location>
</feature>
<feature type="repeat" description="1-8" evidence="11">
    <location>
        <begin position="160"/>
        <end position="168"/>
    </location>
</feature>
<feature type="repeat" description="1-9" evidence="11">
    <location>
        <begin position="169"/>
        <end position="177"/>
    </location>
</feature>
<feature type="repeat" description="1-10" evidence="11">
    <location>
        <begin position="178"/>
        <end position="186"/>
    </location>
</feature>
<feature type="repeat" description="1-11" evidence="11">
    <location>
        <begin position="187"/>
        <end position="195"/>
    </location>
</feature>
<feature type="repeat" description="1-12" evidence="11">
    <location>
        <begin position="196"/>
        <end position="204"/>
    </location>
</feature>
<feature type="repeat" description="1-13" evidence="11">
    <location>
        <begin position="205"/>
        <end position="213"/>
    </location>
</feature>
<feature type="repeat" description="1-14" evidence="11">
    <location>
        <begin position="214"/>
        <end position="222"/>
    </location>
</feature>
<feature type="repeat" description="1-15" evidence="11">
    <location>
        <begin position="223"/>
        <end position="231"/>
    </location>
</feature>
<feature type="repeat" description="1-16" evidence="11">
    <location>
        <begin position="232"/>
        <end position="240"/>
    </location>
</feature>
<feature type="repeat" description="2-1" evidence="11">
    <location>
        <begin position="241"/>
        <end position="257"/>
    </location>
</feature>
<feature type="repeat" description="2-2" evidence="11">
    <location>
        <begin position="258"/>
        <end position="274"/>
    </location>
</feature>
<feature type="repeat" description="2-3" evidence="11">
    <location>
        <begin position="275"/>
        <end position="291"/>
    </location>
</feature>
<feature type="domain" description="TSP type-1" evidence="6">
    <location>
        <begin position="324"/>
        <end position="376"/>
    </location>
</feature>
<feature type="region of interest" description="Disordered" evidence="7">
    <location>
        <begin position="50"/>
        <end position="110"/>
    </location>
</feature>
<feature type="region of interest" description="Required for the binding to heparan sulfate proteoglycans (HSPGs) on the surface of host hepatocytes" evidence="4">
    <location>
        <begin position="81"/>
        <end position="89"/>
    </location>
</feature>
<feature type="region of interest" description="Region I; contains the proteolytic cleavage site" evidence="3">
    <location>
        <begin position="92"/>
        <end position="96"/>
    </location>
</feature>
<feature type="region of interest" description="16 X 9 AA tandem repeats of A-G-N-N-A-A-[AG]-G-[EA]" evidence="11">
    <location>
        <begin position="97"/>
        <end position="240"/>
    </location>
</feature>
<feature type="region of interest" description="3 X 17 AA tandem repeats of A-G-N-N-A-A-A-G-E-A-G-A-G-G-A-G-[RG]" evidence="11">
    <location>
        <begin position="241"/>
        <end position="291"/>
    </location>
</feature>
<feature type="region of interest" description="Disordered" evidence="7">
    <location>
        <begin position="248"/>
        <end position="310"/>
    </location>
</feature>
<feature type="compositionally biased region" description="Basic and acidic residues" evidence="7">
    <location>
        <begin position="66"/>
        <end position="93"/>
    </location>
</feature>
<feature type="compositionally biased region" description="Low complexity" evidence="7">
    <location>
        <begin position="97"/>
        <end position="110"/>
    </location>
</feature>
<feature type="compositionally biased region" description="Gly residues" evidence="7">
    <location>
        <begin position="284"/>
        <end position="293"/>
    </location>
</feature>
<feature type="lipid moiety-binding region" description="GPI-anchor amidated cysteine" evidence="5">
    <location>
        <position position="375"/>
    </location>
</feature>
<feature type="glycosylation site" description="O-linked (Fuc) threonine" evidence="2">
    <location>
        <position position="339"/>
    </location>
</feature>
<feature type="disulfide bond" evidence="4">
    <location>
        <begin position="336"/>
        <end position="370"/>
    </location>
</feature>
<feature type="disulfide bond" evidence="4">
    <location>
        <begin position="340"/>
        <end position="375"/>
    </location>
</feature>
<evidence type="ECO:0000250" key="1">
    <source>
        <dbReference type="UniProtKB" id="P02893"/>
    </source>
</evidence>
<evidence type="ECO:0000250" key="2">
    <source>
        <dbReference type="UniProtKB" id="P19597"/>
    </source>
</evidence>
<evidence type="ECO:0000250" key="3">
    <source>
        <dbReference type="UniProtKB" id="P23093"/>
    </source>
</evidence>
<evidence type="ECO:0000250" key="4">
    <source>
        <dbReference type="UniProtKB" id="Q7K740"/>
    </source>
</evidence>
<evidence type="ECO:0000255" key="5"/>
<evidence type="ECO:0000255" key="6">
    <source>
        <dbReference type="PROSITE-ProRule" id="PRU00210"/>
    </source>
</evidence>
<evidence type="ECO:0000256" key="7">
    <source>
        <dbReference type="SAM" id="MobiDB-lite"/>
    </source>
</evidence>
<evidence type="ECO:0000269" key="8">
    <source>
    </source>
</evidence>
<evidence type="ECO:0000303" key="9">
    <source>
    </source>
</evidence>
<evidence type="ECO:0000305" key="10"/>
<evidence type="ECO:0000305" key="11">
    <source>
    </source>
</evidence>
<keyword id="KW-1003">Cell membrane</keyword>
<keyword id="KW-0963">Cytoplasm</keyword>
<keyword id="KW-1015">Disulfide bond</keyword>
<keyword id="KW-0325">Glycoprotein</keyword>
<keyword id="KW-0336">GPI-anchor</keyword>
<keyword id="KW-0449">Lipoprotein</keyword>
<keyword id="KW-0461">Malaria</keyword>
<keyword id="KW-0472">Membrane</keyword>
<keyword id="KW-0677">Repeat</keyword>
<keyword id="KW-0732">Signal</keyword>
<keyword id="KW-0748">Sporozoite</keyword>
<name>CSP_PLACC</name>
<dbReference type="EMBL" id="M15103">
    <property type="protein sequence ID" value="AAA29533.1"/>
    <property type="molecule type" value="Genomic_DNA"/>
</dbReference>
<dbReference type="PIR" id="C26255">
    <property type="entry name" value="OZZQAS"/>
</dbReference>
<dbReference type="SMR" id="P08673"/>
<dbReference type="GlyCosmos" id="P08673">
    <property type="glycosylation" value="1 site, No reported glycans"/>
</dbReference>
<dbReference type="GO" id="GO:0009986">
    <property type="term" value="C:cell surface"/>
    <property type="evidence" value="ECO:0007669"/>
    <property type="project" value="InterPro"/>
</dbReference>
<dbReference type="GO" id="GO:0005737">
    <property type="term" value="C:cytoplasm"/>
    <property type="evidence" value="ECO:0007669"/>
    <property type="project" value="UniProtKB-SubCell"/>
</dbReference>
<dbReference type="GO" id="GO:0005886">
    <property type="term" value="C:plasma membrane"/>
    <property type="evidence" value="ECO:0007669"/>
    <property type="project" value="UniProtKB-SubCell"/>
</dbReference>
<dbReference type="GO" id="GO:0098552">
    <property type="term" value="C:side of membrane"/>
    <property type="evidence" value="ECO:0007669"/>
    <property type="project" value="UniProtKB-KW"/>
</dbReference>
<dbReference type="Gene3D" id="2.20.100.10">
    <property type="entry name" value="Thrombospondin type-1 (TSP1) repeat"/>
    <property type="match status" value="1"/>
</dbReference>
<dbReference type="InterPro" id="IPR003067">
    <property type="entry name" value="Crcmsprzoite"/>
</dbReference>
<dbReference type="InterPro" id="IPR000884">
    <property type="entry name" value="TSP1_rpt"/>
</dbReference>
<dbReference type="InterPro" id="IPR036383">
    <property type="entry name" value="TSP1_rpt_sf"/>
</dbReference>
<dbReference type="Pfam" id="PF00090">
    <property type="entry name" value="TSP_1"/>
    <property type="match status" value="1"/>
</dbReference>
<dbReference type="PRINTS" id="PR01303">
    <property type="entry name" value="CRCMSPRZOITE"/>
</dbReference>
<dbReference type="SMART" id="SM00209">
    <property type="entry name" value="TSP1"/>
    <property type="match status" value="1"/>
</dbReference>
<dbReference type="SUPFAM" id="SSF82895">
    <property type="entry name" value="TSP-1 type 1 repeat"/>
    <property type="match status" value="1"/>
</dbReference>
<dbReference type="PROSITE" id="PS50092">
    <property type="entry name" value="TSP1"/>
    <property type="match status" value="1"/>
</dbReference>